<organism>
    <name type="scientific">Rickettsia typhi (strain ATCC VR-144 / Wilmington)</name>
    <dbReference type="NCBI Taxonomy" id="257363"/>
    <lineage>
        <taxon>Bacteria</taxon>
        <taxon>Pseudomonadati</taxon>
        <taxon>Pseudomonadota</taxon>
        <taxon>Alphaproteobacteria</taxon>
        <taxon>Rickettsiales</taxon>
        <taxon>Rickettsiaceae</taxon>
        <taxon>Rickettsieae</taxon>
        <taxon>Rickettsia</taxon>
        <taxon>typhus group</taxon>
    </lineage>
</organism>
<sequence length="247" mass="28452">MNERIAILSAYSFVNIIEPANLIPKFLLIGKKKYIRGTILLANEGFNCSFSGSYENVNLVLKQLIELTGSKDVNVKINYSSVHPFQKLKVRLKKEIIAMNVKDLNIEVFKGDYIEPKDWDEFITKQNVIVIDTRNEYEIDIGTFKSAINPRTETFKQFPAWVQQNQALLQGKKIAMFCTGGIRCEKSTSLLKSIGYNEVYHLKGGILQYLEDTHNKNNLWQGKCFVFDDRRAIMDDLSPAEGYWLHR</sequence>
<accession>Q68XP2</accession>
<feature type="chain" id="PRO_0000161506" description="tRNA uridine(34) hydroxylase">
    <location>
        <begin position="1"/>
        <end position="247"/>
    </location>
</feature>
<feature type="domain" description="Rhodanese" evidence="1">
    <location>
        <begin position="124"/>
        <end position="218"/>
    </location>
</feature>
<feature type="active site" description="Cysteine persulfide intermediate" evidence="1">
    <location>
        <position position="178"/>
    </location>
</feature>
<comment type="function">
    <text evidence="1">Catalyzes oxygen-dependent 5-hydroxyuridine (ho5U) modification at position 34 in tRNAs.</text>
</comment>
<comment type="catalytic activity">
    <reaction evidence="1">
        <text>uridine(34) in tRNA + AH2 + O2 = 5-hydroxyuridine(34) in tRNA + A + H2O</text>
        <dbReference type="Rhea" id="RHEA:64224"/>
        <dbReference type="Rhea" id="RHEA-COMP:11727"/>
        <dbReference type="Rhea" id="RHEA-COMP:13381"/>
        <dbReference type="ChEBI" id="CHEBI:13193"/>
        <dbReference type="ChEBI" id="CHEBI:15377"/>
        <dbReference type="ChEBI" id="CHEBI:15379"/>
        <dbReference type="ChEBI" id="CHEBI:17499"/>
        <dbReference type="ChEBI" id="CHEBI:65315"/>
        <dbReference type="ChEBI" id="CHEBI:136877"/>
    </reaction>
</comment>
<comment type="similarity">
    <text evidence="1">Belongs to the TrhO family.</text>
</comment>
<protein>
    <recommendedName>
        <fullName evidence="1">tRNA uridine(34) hydroxylase</fullName>
        <ecNumber evidence="1">1.14.-.-</ecNumber>
    </recommendedName>
    <alternativeName>
        <fullName evidence="1">tRNA hydroxylation protein O</fullName>
    </alternativeName>
</protein>
<dbReference type="EC" id="1.14.-.-" evidence="1"/>
<dbReference type="EMBL" id="AE017197">
    <property type="protein sequence ID" value="AAU03600.1"/>
    <property type="molecule type" value="Genomic_DNA"/>
</dbReference>
<dbReference type="RefSeq" id="WP_011190587.1">
    <property type="nucleotide sequence ID" value="NC_006142.1"/>
</dbReference>
<dbReference type="SMR" id="Q68XP2"/>
<dbReference type="KEGG" id="rty:RT0114"/>
<dbReference type="eggNOG" id="COG1054">
    <property type="taxonomic scope" value="Bacteria"/>
</dbReference>
<dbReference type="HOGENOM" id="CLU_038878_0_1_5"/>
<dbReference type="OrthoDB" id="9778326at2"/>
<dbReference type="Proteomes" id="UP000000604">
    <property type="component" value="Chromosome"/>
</dbReference>
<dbReference type="GO" id="GO:0016705">
    <property type="term" value="F:oxidoreductase activity, acting on paired donors, with incorporation or reduction of molecular oxygen"/>
    <property type="evidence" value="ECO:0007669"/>
    <property type="project" value="UniProtKB-UniRule"/>
</dbReference>
<dbReference type="GO" id="GO:0006400">
    <property type="term" value="P:tRNA modification"/>
    <property type="evidence" value="ECO:0007669"/>
    <property type="project" value="UniProtKB-UniRule"/>
</dbReference>
<dbReference type="CDD" id="cd01518">
    <property type="entry name" value="RHOD_YceA"/>
    <property type="match status" value="1"/>
</dbReference>
<dbReference type="Gene3D" id="3.30.70.100">
    <property type="match status" value="1"/>
</dbReference>
<dbReference type="Gene3D" id="3.40.250.10">
    <property type="entry name" value="Rhodanese-like domain"/>
    <property type="match status" value="1"/>
</dbReference>
<dbReference type="HAMAP" id="MF_00469">
    <property type="entry name" value="TrhO"/>
    <property type="match status" value="1"/>
</dbReference>
<dbReference type="InterPro" id="IPR001763">
    <property type="entry name" value="Rhodanese-like_dom"/>
</dbReference>
<dbReference type="InterPro" id="IPR036873">
    <property type="entry name" value="Rhodanese-like_dom_sf"/>
</dbReference>
<dbReference type="InterPro" id="IPR020936">
    <property type="entry name" value="TrhO"/>
</dbReference>
<dbReference type="InterPro" id="IPR040503">
    <property type="entry name" value="TRHO_N"/>
</dbReference>
<dbReference type="NCBIfam" id="NF002397">
    <property type="entry name" value="PRK01415.1"/>
    <property type="match status" value="1"/>
</dbReference>
<dbReference type="PANTHER" id="PTHR43268:SF3">
    <property type="entry name" value="RHODANESE-LIKE DOMAIN-CONTAINING PROTEIN 7-RELATED"/>
    <property type="match status" value="1"/>
</dbReference>
<dbReference type="PANTHER" id="PTHR43268">
    <property type="entry name" value="THIOSULFATE SULFURTRANSFERASE/RHODANESE-LIKE DOMAIN-CONTAINING PROTEIN 2"/>
    <property type="match status" value="1"/>
</dbReference>
<dbReference type="Pfam" id="PF00581">
    <property type="entry name" value="Rhodanese"/>
    <property type="match status" value="1"/>
</dbReference>
<dbReference type="Pfam" id="PF17773">
    <property type="entry name" value="UPF0176_N"/>
    <property type="match status" value="1"/>
</dbReference>
<dbReference type="SMART" id="SM00450">
    <property type="entry name" value="RHOD"/>
    <property type="match status" value="1"/>
</dbReference>
<dbReference type="SUPFAM" id="SSF52821">
    <property type="entry name" value="Rhodanese/Cell cycle control phosphatase"/>
    <property type="match status" value="1"/>
</dbReference>
<dbReference type="PROSITE" id="PS50206">
    <property type="entry name" value="RHODANESE_3"/>
    <property type="match status" value="1"/>
</dbReference>
<gene>
    <name evidence="1" type="primary">trhO</name>
    <name type="ordered locus">RT0114</name>
</gene>
<name>TRHO_RICTY</name>
<keyword id="KW-0560">Oxidoreductase</keyword>
<keyword id="KW-0819">tRNA processing</keyword>
<reference key="1">
    <citation type="journal article" date="2004" name="J. Bacteriol.">
        <title>Complete genome sequence of Rickettsia typhi and comparison with sequences of other Rickettsiae.</title>
        <authorList>
            <person name="McLeod M.P."/>
            <person name="Qin X."/>
            <person name="Karpathy S.E."/>
            <person name="Gioia J."/>
            <person name="Highlander S.K."/>
            <person name="Fox G.E."/>
            <person name="McNeill T.Z."/>
            <person name="Jiang H."/>
            <person name="Muzny D."/>
            <person name="Jacob L.S."/>
            <person name="Hawes A.C."/>
            <person name="Sodergren E."/>
            <person name="Gill R."/>
            <person name="Hume J."/>
            <person name="Morgan M."/>
            <person name="Fan G."/>
            <person name="Amin A.G."/>
            <person name="Gibbs R.A."/>
            <person name="Hong C."/>
            <person name="Yu X.-J."/>
            <person name="Walker D.H."/>
            <person name="Weinstock G.M."/>
        </authorList>
    </citation>
    <scope>NUCLEOTIDE SEQUENCE [LARGE SCALE GENOMIC DNA]</scope>
    <source>
        <strain>ATCC VR-144 / Wilmington</strain>
    </source>
</reference>
<proteinExistence type="inferred from homology"/>
<evidence type="ECO:0000255" key="1">
    <source>
        <dbReference type="HAMAP-Rule" id="MF_00469"/>
    </source>
</evidence>